<evidence type="ECO:0000255" key="1">
    <source>
        <dbReference type="HAMAP-Rule" id="MF_01347"/>
    </source>
</evidence>
<comment type="function">
    <text evidence="1">Produces ATP from ADP in the presence of a proton gradient across the membrane. The catalytic sites are hosted primarily by the beta subunits.</text>
</comment>
<comment type="catalytic activity">
    <reaction evidence="1">
        <text>ATP + H2O + 4 H(+)(in) = ADP + phosphate + 5 H(+)(out)</text>
        <dbReference type="Rhea" id="RHEA:57720"/>
        <dbReference type="ChEBI" id="CHEBI:15377"/>
        <dbReference type="ChEBI" id="CHEBI:15378"/>
        <dbReference type="ChEBI" id="CHEBI:30616"/>
        <dbReference type="ChEBI" id="CHEBI:43474"/>
        <dbReference type="ChEBI" id="CHEBI:456216"/>
        <dbReference type="EC" id="7.1.2.2"/>
    </reaction>
</comment>
<comment type="subunit">
    <text evidence="1">F-type ATPases have 2 components, CF(1) - the catalytic core - and CF(0) - the membrane proton channel. CF(1) has five subunits: alpha(3), beta(3), gamma(1), delta(1), epsilon(1). CF(0) has three main subunits: a(1), b(2) and c(9-12). The alpha and beta chains form an alternating ring which encloses part of the gamma chain. CF(1) is attached to CF(0) by a central stalk formed by the gamma and epsilon chains, while a peripheral stalk is formed by the delta and b chains.</text>
</comment>
<comment type="subcellular location">
    <subcellularLocation>
        <location evidence="1">Cell inner membrane</location>
        <topology evidence="1">Peripheral membrane protein</topology>
    </subcellularLocation>
</comment>
<comment type="similarity">
    <text evidence="1">Belongs to the ATPase alpha/beta chains family.</text>
</comment>
<sequence>MATGKIVQVIGAVVDVEFPQDAVPRVYDALEVQNGNEKLVLEVQQQLGGGIVRTIAMGSSDGLRRGLDVKDLEHPIEVPVGKATLGRIMNVLGEPVDMKGEIGEEERWAIHRAAPSYEELSNSQELLETGIKVIDLMCPFAKGGKVGLFGGAGVGKTVNMMELIRNIAIEHSGYSVFAGVGERTREGNDFYHEMTDSNVIDKVSLVYGQMNEPPGNRLRVALTGLTMAEKFRDEGRDVLLFVDNIYRYTLAGTEVSALLGRMPSAVGYQPTLAEEMGVLQERITSTKTGSITSVQAVYVPADDLTDPSPATTFAHLDATVVLSRQIASLGIYPAVDPLDSTSRQLDPLVVGQEHYDTARGVQSILQRYQELKDIIAILGMDELSEEDKLVVARARKIQRFLSQPFFVAEVFTGSPGKYVSLKDTIRGFKGIMEGEYDHLPEQAFYMVGSIDEAVEKAKKL</sequence>
<name>ATPB_SALCH</name>
<protein>
    <recommendedName>
        <fullName evidence="1">ATP synthase subunit beta</fullName>
        <ecNumber evidence="1">7.1.2.2</ecNumber>
    </recommendedName>
    <alternativeName>
        <fullName evidence="1">ATP synthase F1 sector subunit beta</fullName>
    </alternativeName>
    <alternativeName>
        <fullName evidence="1">F-ATPase subunit beta</fullName>
    </alternativeName>
</protein>
<accession>Q57HX9</accession>
<keyword id="KW-0066">ATP synthesis</keyword>
<keyword id="KW-0067">ATP-binding</keyword>
<keyword id="KW-0997">Cell inner membrane</keyword>
<keyword id="KW-1003">Cell membrane</keyword>
<keyword id="KW-0139">CF(1)</keyword>
<keyword id="KW-0375">Hydrogen ion transport</keyword>
<keyword id="KW-0406">Ion transport</keyword>
<keyword id="KW-0472">Membrane</keyword>
<keyword id="KW-0547">Nucleotide-binding</keyword>
<keyword id="KW-1278">Translocase</keyword>
<keyword id="KW-0813">Transport</keyword>
<dbReference type="EC" id="7.1.2.2" evidence="1"/>
<dbReference type="EMBL" id="AE017220">
    <property type="protein sequence ID" value="AAX67683.1"/>
    <property type="molecule type" value="Genomic_DNA"/>
</dbReference>
<dbReference type="RefSeq" id="WP_000190499.1">
    <property type="nucleotide sequence ID" value="NC_006905.1"/>
</dbReference>
<dbReference type="SMR" id="Q57HX9"/>
<dbReference type="GeneID" id="66758154"/>
<dbReference type="KEGG" id="sec:SCH_3777"/>
<dbReference type="HOGENOM" id="CLU_022398_0_2_6"/>
<dbReference type="Proteomes" id="UP000000538">
    <property type="component" value="Chromosome"/>
</dbReference>
<dbReference type="GO" id="GO:0005886">
    <property type="term" value="C:plasma membrane"/>
    <property type="evidence" value="ECO:0007669"/>
    <property type="project" value="UniProtKB-SubCell"/>
</dbReference>
<dbReference type="GO" id="GO:0045259">
    <property type="term" value="C:proton-transporting ATP synthase complex"/>
    <property type="evidence" value="ECO:0007669"/>
    <property type="project" value="UniProtKB-KW"/>
</dbReference>
<dbReference type="GO" id="GO:0005524">
    <property type="term" value="F:ATP binding"/>
    <property type="evidence" value="ECO:0007669"/>
    <property type="project" value="UniProtKB-UniRule"/>
</dbReference>
<dbReference type="GO" id="GO:0016887">
    <property type="term" value="F:ATP hydrolysis activity"/>
    <property type="evidence" value="ECO:0007669"/>
    <property type="project" value="InterPro"/>
</dbReference>
<dbReference type="GO" id="GO:0046933">
    <property type="term" value="F:proton-transporting ATP synthase activity, rotational mechanism"/>
    <property type="evidence" value="ECO:0007669"/>
    <property type="project" value="UniProtKB-UniRule"/>
</dbReference>
<dbReference type="CDD" id="cd18110">
    <property type="entry name" value="ATP-synt_F1_beta_C"/>
    <property type="match status" value="1"/>
</dbReference>
<dbReference type="CDD" id="cd18115">
    <property type="entry name" value="ATP-synt_F1_beta_N"/>
    <property type="match status" value="1"/>
</dbReference>
<dbReference type="CDD" id="cd01133">
    <property type="entry name" value="F1-ATPase_beta_CD"/>
    <property type="match status" value="1"/>
</dbReference>
<dbReference type="FunFam" id="1.10.1140.10:FF:000001">
    <property type="entry name" value="ATP synthase subunit beta"/>
    <property type="match status" value="1"/>
</dbReference>
<dbReference type="FunFam" id="2.40.10.170:FF:000003">
    <property type="entry name" value="ATP synthase subunit beta"/>
    <property type="match status" value="1"/>
</dbReference>
<dbReference type="FunFam" id="3.40.50.300:FF:000004">
    <property type="entry name" value="ATP synthase subunit beta"/>
    <property type="match status" value="1"/>
</dbReference>
<dbReference type="Gene3D" id="2.40.10.170">
    <property type="match status" value="1"/>
</dbReference>
<dbReference type="Gene3D" id="1.10.1140.10">
    <property type="entry name" value="Bovine Mitochondrial F1-atpase, Atp Synthase Beta Chain, Chain D, domain 3"/>
    <property type="match status" value="1"/>
</dbReference>
<dbReference type="Gene3D" id="3.40.50.300">
    <property type="entry name" value="P-loop containing nucleotide triphosphate hydrolases"/>
    <property type="match status" value="1"/>
</dbReference>
<dbReference type="HAMAP" id="MF_01347">
    <property type="entry name" value="ATP_synth_beta_bact"/>
    <property type="match status" value="1"/>
</dbReference>
<dbReference type="InterPro" id="IPR003593">
    <property type="entry name" value="AAA+_ATPase"/>
</dbReference>
<dbReference type="InterPro" id="IPR055190">
    <property type="entry name" value="ATP-synt_VA_C"/>
</dbReference>
<dbReference type="InterPro" id="IPR005722">
    <property type="entry name" value="ATP_synth_F1_bsu"/>
</dbReference>
<dbReference type="InterPro" id="IPR020003">
    <property type="entry name" value="ATPase_a/bsu_AS"/>
</dbReference>
<dbReference type="InterPro" id="IPR050053">
    <property type="entry name" value="ATPase_alpha/beta_chains"/>
</dbReference>
<dbReference type="InterPro" id="IPR004100">
    <property type="entry name" value="ATPase_F1/V1/A1_a/bsu_N"/>
</dbReference>
<dbReference type="InterPro" id="IPR036121">
    <property type="entry name" value="ATPase_F1/V1/A1_a/bsu_N_sf"/>
</dbReference>
<dbReference type="InterPro" id="IPR000194">
    <property type="entry name" value="ATPase_F1/V1/A1_a/bsu_nucl-bd"/>
</dbReference>
<dbReference type="InterPro" id="IPR024034">
    <property type="entry name" value="ATPase_F1/V1_b/a_C"/>
</dbReference>
<dbReference type="InterPro" id="IPR027417">
    <property type="entry name" value="P-loop_NTPase"/>
</dbReference>
<dbReference type="NCBIfam" id="TIGR01039">
    <property type="entry name" value="atpD"/>
    <property type="match status" value="1"/>
</dbReference>
<dbReference type="PANTHER" id="PTHR15184">
    <property type="entry name" value="ATP SYNTHASE"/>
    <property type="match status" value="1"/>
</dbReference>
<dbReference type="PANTHER" id="PTHR15184:SF71">
    <property type="entry name" value="ATP SYNTHASE SUBUNIT BETA, MITOCHONDRIAL"/>
    <property type="match status" value="1"/>
</dbReference>
<dbReference type="Pfam" id="PF00006">
    <property type="entry name" value="ATP-synt_ab"/>
    <property type="match status" value="1"/>
</dbReference>
<dbReference type="Pfam" id="PF02874">
    <property type="entry name" value="ATP-synt_ab_N"/>
    <property type="match status" value="1"/>
</dbReference>
<dbReference type="Pfam" id="PF22919">
    <property type="entry name" value="ATP-synt_VA_C"/>
    <property type="match status" value="1"/>
</dbReference>
<dbReference type="SMART" id="SM00382">
    <property type="entry name" value="AAA"/>
    <property type="match status" value="1"/>
</dbReference>
<dbReference type="SUPFAM" id="SSF47917">
    <property type="entry name" value="C-terminal domain of alpha and beta subunits of F1 ATP synthase"/>
    <property type="match status" value="1"/>
</dbReference>
<dbReference type="SUPFAM" id="SSF50615">
    <property type="entry name" value="N-terminal domain of alpha and beta subunits of F1 ATP synthase"/>
    <property type="match status" value="1"/>
</dbReference>
<dbReference type="SUPFAM" id="SSF52540">
    <property type="entry name" value="P-loop containing nucleoside triphosphate hydrolases"/>
    <property type="match status" value="1"/>
</dbReference>
<dbReference type="PROSITE" id="PS00152">
    <property type="entry name" value="ATPASE_ALPHA_BETA"/>
    <property type="match status" value="1"/>
</dbReference>
<proteinExistence type="inferred from homology"/>
<feature type="chain" id="PRO_0000254369" description="ATP synthase subunit beta">
    <location>
        <begin position="1"/>
        <end position="460"/>
    </location>
</feature>
<feature type="binding site" evidence="1">
    <location>
        <begin position="150"/>
        <end position="157"/>
    </location>
    <ligand>
        <name>ATP</name>
        <dbReference type="ChEBI" id="CHEBI:30616"/>
    </ligand>
</feature>
<organism>
    <name type="scientific">Salmonella choleraesuis (strain SC-B67)</name>
    <dbReference type="NCBI Taxonomy" id="321314"/>
    <lineage>
        <taxon>Bacteria</taxon>
        <taxon>Pseudomonadati</taxon>
        <taxon>Pseudomonadota</taxon>
        <taxon>Gammaproteobacteria</taxon>
        <taxon>Enterobacterales</taxon>
        <taxon>Enterobacteriaceae</taxon>
        <taxon>Salmonella</taxon>
    </lineage>
</organism>
<reference key="1">
    <citation type="journal article" date="2005" name="Nucleic Acids Res.">
        <title>The genome sequence of Salmonella enterica serovar Choleraesuis, a highly invasive and resistant zoonotic pathogen.</title>
        <authorList>
            <person name="Chiu C.-H."/>
            <person name="Tang P."/>
            <person name="Chu C."/>
            <person name="Hu S."/>
            <person name="Bao Q."/>
            <person name="Yu J."/>
            <person name="Chou Y.-Y."/>
            <person name="Wang H.-S."/>
            <person name="Lee Y.-S."/>
        </authorList>
    </citation>
    <scope>NUCLEOTIDE SEQUENCE [LARGE SCALE GENOMIC DNA]</scope>
    <source>
        <strain>SC-B67</strain>
    </source>
</reference>
<gene>
    <name evidence="1" type="primary">atpD</name>
    <name type="ordered locus">SCH_3777</name>
</gene>